<dbReference type="EMBL" id="CP000304">
    <property type="protein sequence ID" value="ABP78040.1"/>
    <property type="molecule type" value="Genomic_DNA"/>
</dbReference>
<dbReference type="RefSeq" id="WP_011911572.1">
    <property type="nucleotide sequence ID" value="NC_009434.1"/>
</dbReference>
<dbReference type="SMR" id="A4VGD9"/>
<dbReference type="KEGG" id="psa:PST_0334"/>
<dbReference type="eggNOG" id="COG1826">
    <property type="taxonomic scope" value="Bacteria"/>
</dbReference>
<dbReference type="HOGENOM" id="CLU_086034_1_1_6"/>
<dbReference type="Proteomes" id="UP000000233">
    <property type="component" value="Chromosome"/>
</dbReference>
<dbReference type="GO" id="GO:0033281">
    <property type="term" value="C:TAT protein transport complex"/>
    <property type="evidence" value="ECO:0007669"/>
    <property type="project" value="UniProtKB-UniRule"/>
</dbReference>
<dbReference type="GO" id="GO:0008320">
    <property type="term" value="F:protein transmembrane transporter activity"/>
    <property type="evidence" value="ECO:0007669"/>
    <property type="project" value="UniProtKB-UniRule"/>
</dbReference>
<dbReference type="GO" id="GO:0043953">
    <property type="term" value="P:protein transport by the Tat complex"/>
    <property type="evidence" value="ECO:0007669"/>
    <property type="project" value="UniProtKB-UniRule"/>
</dbReference>
<dbReference type="Gene3D" id="1.20.5.3310">
    <property type="match status" value="1"/>
</dbReference>
<dbReference type="HAMAP" id="MF_00237">
    <property type="entry name" value="TatB"/>
    <property type="match status" value="1"/>
</dbReference>
<dbReference type="InterPro" id="IPR003369">
    <property type="entry name" value="TatA/B/E"/>
</dbReference>
<dbReference type="InterPro" id="IPR018448">
    <property type="entry name" value="TatB"/>
</dbReference>
<dbReference type="NCBIfam" id="TIGR01410">
    <property type="entry name" value="tatB"/>
    <property type="match status" value="1"/>
</dbReference>
<dbReference type="PANTHER" id="PTHR33162">
    <property type="entry name" value="SEC-INDEPENDENT PROTEIN TRANSLOCASE PROTEIN TATA, CHLOROPLASTIC"/>
    <property type="match status" value="1"/>
</dbReference>
<dbReference type="PANTHER" id="PTHR33162:SF1">
    <property type="entry name" value="SEC-INDEPENDENT PROTEIN TRANSLOCASE PROTEIN TATA, CHLOROPLASTIC"/>
    <property type="match status" value="1"/>
</dbReference>
<dbReference type="Pfam" id="PF02416">
    <property type="entry name" value="TatA_B_E"/>
    <property type="match status" value="1"/>
</dbReference>
<dbReference type="PRINTS" id="PR01506">
    <property type="entry name" value="TATBPROTEIN"/>
</dbReference>
<feature type="chain" id="PRO_0000301210" description="Sec-independent protein translocase protein TatB">
    <location>
        <begin position="1"/>
        <end position="139"/>
    </location>
</feature>
<feature type="transmembrane region" description="Helical" evidence="1">
    <location>
        <begin position="1"/>
        <end position="21"/>
    </location>
</feature>
<feature type="region of interest" description="Disordered" evidence="2">
    <location>
        <begin position="69"/>
        <end position="139"/>
    </location>
</feature>
<feature type="compositionally biased region" description="Pro residues" evidence="2">
    <location>
        <begin position="80"/>
        <end position="95"/>
    </location>
</feature>
<evidence type="ECO:0000255" key="1">
    <source>
        <dbReference type="HAMAP-Rule" id="MF_00237"/>
    </source>
</evidence>
<evidence type="ECO:0000256" key="2">
    <source>
        <dbReference type="SAM" id="MobiDB-lite"/>
    </source>
</evidence>
<organism>
    <name type="scientific">Stutzerimonas stutzeri (strain A1501)</name>
    <name type="common">Pseudomonas stutzeri</name>
    <dbReference type="NCBI Taxonomy" id="379731"/>
    <lineage>
        <taxon>Bacteria</taxon>
        <taxon>Pseudomonadati</taxon>
        <taxon>Pseudomonadota</taxon>
        <taxon>Gammaproteobacteria</taxon>
        <taxon>Pseudomonadales</taxon>
        <taxon>Pseudomonadaceae</taxon>
        <taxon>Stutzerimonas</taxon>
    </lineage>
</organism>
<name>TATB_STUS1</name>
<reference key="1">
    <citation type="journal article" date="2008" name="Proc. Natl. Acad. Sci. U.S.A.">
        <title>Nitrogen fixation island and rhizosphere competence traits in the genome of root-associated Pseudomonas stutzeri A1501.</title>
        <authorList>
            <person name="Yan Y."/>
            <person name="Yang J."/>
            <person name="Dou Y."/>
            <person name="Chen M."/>
            <person name="Ping S."/>
            <person name="Peng J."/>
            <person name="Lu W."/>
            <person name="Zhang W."/>
            <person name="Yao Z."/>
            <person name="Li H."/>
            <person name="Liu W."/>
            <person name="He S."/>
            <person name="Geng L."/>
            <person name="Zhang X."/>
            <person name="Yang F."/>
            <person name="Yu H."/>
            <person name="Zhan Y."/>
            <person name="Li D."/>
            <person name="Lin Z."/>
            <person name="Wang Y."/>
            <person name="Elmerich C."/>
            <person name="Lin M."/>
            <person name="Jin Q."/>
        </authorList>
    </citation>
    <scope>NUCLEOTIDE SEQUENCE [LARGE SCALE GENOMIC DNA]</scope>
    <source>
        <strain>A1501</strain>
    </source>
</reference>
<comment type="function">
    <text evidence="1">Part of the twin-arginine translocation (Tat) system that transports large folded proteins containing a characteristic twin-arginine motif in their signal peptide across membranes. Together with TatC, TatB is part of a receptor directly interacting with Tat signal peptides. TatB may form an oligomeric binding site that transiently accommodates folded Tat precursor proteins before their translocation.</text>
</comment>
<comment type="subunit">
    <text evidence="1">The Tat system comprises two distinct complexes: a TatABC complex, containing multiple copies of TatA, TatB and TatC subunits, and a separate TatA complex, containing only TatA subunits. Substrates initially bind to the TatABC complex, which probably triggers association of the separate TatA complex to form the active translocon.</text>
</comment>
<comment type="subcellular location">
    <subcellularLocation>
        <location evidence="1">Cell inner membrane</location>
        <topology evidence="1">Single-pass membrane protein</topology>
    </subcellularLocation>
</comment>
<comment type="similarity">
    <text evidence="1">Belongs to the TatB family.</text>
</comment>
<accession>A4VGD9</accession>
<gene>
    <name evidence="1" type="primary">tatB</name>
    <name type="ordered locus">PST_0334</name>
</gene>
<sequence>MFDIGFTELLLVGLVALMVLGPERLPGAVRTTGLWVGRLKRSFSNIKAEVEREIGADEIRRQLHNERILDLEREMKQSIMPPPASNPAATPPSPPSEGAGQPANAASSSPGDTVTPAANPPAPSTETAQPLRSDRPSEP</sequence>
<proteinExistence type="inferred from homology"/>
<keyword id="KW-0997">Cell inner membrane</keyword>
<keyword id="KW-1003">Cell membrane</keyword>
<keyword id="KW-0472">Membrane</keyword>
<keyword id="KW-0653">Protein transport</keyword>
<keyword id="KW-1185">Reference proteome</keyword>
<keyword id="KW-0811">Translocation</keyword>
<keyword id="KW-0812">Transmembrane</keyword>
<keyword id="KW-1133">Transmembrane helix</keyword>
<keyword id="KW-0813">Transport</keyword>
<protein>
    <recommendedName>
        <fullName evidence="1">Sec-independent protein translocase protein TatB</fullName>
    </recommendedName>
</protein>